<comment type="catalytic activity">
    <reaction evidence="1">
        <text>2-(N(omega)-L-arginino)succinate = fumarate + L-arginine</text>
        <dbReference type="Rhea" id="RHEA:24020"/>
        <dbReference type="ChEBI" id="CHEBI:29806"/>
        <dbReference type="ChEBI" id="CHEBI:32682"/>
        <dbReference type="ChEBI" id="CHEBI:57472"/>
        <dbReference type="EC" id="4.3.2.1"/>
    </reaction>
</comment>
<comment type="pathway">
    <text evidence="1">Amino-acid biosynthesis; L-arginine biosynthesis; L-arginine from L-ornithine and carbamoyl phosphate: step 3/3.</text>
</comment>
<comment type="subcellular location">
    <subcellularLocation>
        <location evidence="1">Cytoplasm</location>
    </subcellularLocation>
</comment>
<comment type="similarity">
    <text evidence="1">Belongs to the lyase 1 family. Argininosuccinate lyase subfamily.</text>
</comment>
<feature type="chain" id="PRO_0000240744" description="Argininosuccinate lyase">
    <location>
        <begin position="1"/>
        <end position="476"/>
    </location>
</feature>
<reference key="1">
    <citation type="submission" date="2005-08" db="EMBL/GenBank/DDBJ databases">
        <title>Complete sequence of chromosome 1 of Nitrosospira multiformis ATCC 25196.</title>
        <authorList>
            <person name="Copeland A."/>
            <person name="Lucas S."/>
            <person name="Lapidus A."/>
            <person name="Barry K."/>
            <person name="Detter J.C."/>
            <person name="Glavina T."/>
            <person name="Hammon N."/>
            <person name="Israni S."/>
            <person name="Pitluck S."/>
            <person name="Chain P."/>
            <person name="Malfatti S."/>
            <person name="Shin M."/>
            <person name="Vergez L."/>
            <person name="Schmutz J."/>
            <person name="Larimer F."/>
            <person name="Land M."/>
            <person name="Hauser L."/>
            <person name="Kyrpides N."/>
            <person name="Lykidis A."/>
            <person name="Richardson P."/>
        </authorList>
    </citation>
    <scope>NUCLEOTIDE SEQUENCE [LARGE SCALE GENOMIC DNA]</scope>
    <source>
        <strain>ATCC 25196 / NCIMB 11849 / C 71</strain>
    </source>
</reference>
<proteinExistence type="inferred from homology"/>
<gene>
    <name evidence="1" type="primary">argH</name>
    <name type="ordered locus">Nmul_A2328</name>
</gene>
<organism>
    <name type="scientific">Nitrosospira multiformis (strain ATCC 25196 / NCIMB 11849 / C 71)</name>
    <dbReference type="NCBI Taxonomy" id="323848"/>
    <lineage>
        <taxon>Bacteria</taxon>
        <taxon>Pseudomonadati</taxon>
        <taxon>Pseudomonadota</taxon>
        <taxon>Betaproteobacteria</taxon>
        <taxon>Nitrosomonadales</taxon>
        <taxon>Nitrosomonadaceae</taxon>
        <taxon>Nitrosospira</taxon>
    </lineage>
</organism>
<keyword id="KW-0028">Amino-acid biosynthesis</keyword>
<keyword id="KW-0055">Arginine biosynthesis</keyword>
<keyword id="KW-0963">Cytoplasm</keyword>
<keyword id="KW-0456">Lyase</keyword>
<keyword id="KW-1185">Reference proteome</keyword>
<protein>
    <recommendedName>
        <fullName evidence="1">Argininosuccinate lyase</fullName>
        <shortName evidence="1">ASAL</shortName>
        <ecNumber evidence="1">4.3.2.1</ecNumber>
    </recommendedName>
    <alternativeName>
        <fullName evidence="1">Arginosuccinase</fullName>
    </alternativeName>
</protein>
<evidence type="ECO:0000255" key="1">
    <source>
        <dbReference type="HAMAP-Rule" id="MF_00006"/>
    </source>
</evidence>
<accession>Q2Y6K2</accession>
<dbReference type="EC" id="4.3.2.1" evidence="1"/>
<dbReference type="EMBL" id="CP000103">
    <property type="protein sequence ID" value="ABB75619.1"/>
    <property type="molecule type" value="Genomic_DNA"/>
</dbReference>
<dbReference type="RefSeq" id="WP_011381622.1">
    <property type="nucleotide sequence ID" value="NC_007614.1"/>
</dbReference>
<dbReference type="SMR" id="Q2Y6K2"/>
<dbReference type="STRING" id="323848.Nmul_A2328"/>
<dbReference type="KEGG" id="nmu:Nmul_A2328"/>
<dbReference type="eggNOG" id="COG0165">
    <property type="taxonomic scope" value="Bacteria"/>
</dbReference>
<dbReference type="HOGENOM" id="CLU_027272_2_3_4"/>
<dbReference type="OrthoDB" id="9769623at2"/>
<dbReference type="UniPathway" id="UPA00068">
    <property type="reaction ID" value="UER00114"/>
</dbReference>
<dbReference type="Proteomes" id="UP000002718">
    <property type="component" value="Chromosome"/>
</dbReference>
<dbReference type="GO" id="GO:0005829">
    <property type="term" value="C:cytosol"/>
    <property type="evidence" value="ECO:0007669"/>
    <property type="project" value="TreeGrafter"/>
</dbReference>
<dbReference type="GO" id="GO:0004056">
    <property type="term" value="F:argininosuccinate lyase activity"/>
    <property type="evidence" value="ECO:0007669"/>
    <property type="project" value="UniProtKB-UniRule"/>
</dbReference>
<dbReference type="GO" id="GO:0042450">
    <property type="term" value="P:arginine biosynthetic process via ornithine"/>
    <property type="evidence" value="ECO:0007669"/>
    <property type="project" value="InterPro"/>
</dbReference>
<dbReference type="GO" id="GO:0006526">
    <property type="term" value="P:L-arginine biosynthetic process"/>
    <property type="evidence" value="ECO:0007669"/>
    <property type="project" value="UniProtKB-UniRule"/>
</dbReference>
<dbReference type="CDD" id="cd01359">
    <property type="entry name" value="Argininosuccinate_lyase"/>
    <property type="match status" value="1"/>
</dbReference>
<dbReference type="FunFam" id="1.10.275.10:FF:000002">
    <property type="entry name" value="Argininosuccinate lyase"/>
    <property type="match status" value="1"/>
</dbReference>
<dbReference type="FunFam" id="1.10.40.30:FF:000001">
    <property type="entry name" value="Argininosuccinate lyase"/>
    <property type="match status" value="1"/>
</dbReference>
<dbReference type="FunFam" id="1.20.200.10:FF:000015">
    <property type="entry name" value="argininosuccinate lyase isoform X2"/>
    <property type="match status" value="1"/>
</dbReference>
<dbReference type="Gene3D" id="1.10.40.30">
    <property type="entry name" value="Fumarase/aspartase (C-terminal domain)"/>
    <property type="match status" value="1"/>
</dbReference>
<dbReference type="Gene3D" id="1.20.200.10">
    <property type="entry name" value="Fumarase/aspartase (Central domain)"/>
    <property type="match status" value="1"/>
</dbReference>
<dbReference type="Gene3D" id="1.10.275.10">
    <property type="entry name" value="Fumarase/aspartase (N-terminal domain)"/>
    <property type="match status" value="1"/>
</dbReference>
<dbReference type="HAMAP" id="MF_00006">
    <property type="entry name" value="Arg_succ_lyase"/>
    <property type="match status" value="1"/>
</dbReference>
<dbReference type="InterPro" id="IPR029419">
    <property type="entry name" value="Arg_succ_lyase_C"/>
</dbReference>
<dbReference type="InterPro" id="IPR009049">
    <property type="entry name" value="Argininosuccinate_lyase"/>
</dbReference>
<dbReference type="InterPro" id="IPR024083">
    <property type="entry name" value="Fumarase/histidase_N"/>
</dbReference>
<dbReference type="InterPro" id="IPR020557">
    <property type="entry name" value="Fumarate_lyase_CS"/>
</dbReference>
<dbReference type="InterPro" id="IPR000362">
    <property type="entry name" value="Fumarate_lyase_fam"/>
</dbReference>
<dbReference type="InterPro" id="IPR022761">
    <property type="entry name" value="Fumarate_lyase_N"/>
</dbReference>
<dbReference type="InterPro" id="IPR008948">
    <property type="entry name" value="L-Aspartase-like"/>
</dbReference>
<dbReference type="NCBIfam" id="TIGR00838">
    <property type="entry name" value="argH"/>
    <property type="match status" value="1"/>
</dbReference>
<dbReference type="PANTHER" id="PTHR43814">
    <property type="entry name" value="ARGININOSUCCINATE LYASE"/>
    <property type="match status" value="1"/>
</dbReference>
<dbReference type="PANTHER" id="PTHR43814:SF1">
    <property type="entry name" value="ARGININOSUCCINATE LYASE"/>
    <property type="match status" value="1"/>
</dbReference>
<dbReference type="Pfam" id="PF14698">
    <property type="entry name" value="ASL_C2"/>
    <property type="match status" value="1"/>
</dbReference>
<dbReference type="Pfam" id="PF00206">
    <property type="entry name" value="Lyase_1"/>
    <property type="match status" value="1"/>
</dbReference>
<dbReference type="PRINTS" id="PR00145">
    <property type="entry name" value="ARGSUCLYASE"/>
</dbReference>
<dbReference type="PRINTS" id="PR00149">
    <property type="entry name" value="FUMRATELYASE"/>
</dbReference>
<dbReference type="SUPFAM" id="SSF48557">
    <property type="entry name" value="L-aspartase-like"/>
    <property type="match status" value="1"/>
</dbReference>
<dbReference type="PROSITE" id="PS00163">
    <property type="entry name" value="FUMARATE_LYASES"/>
    <property type="match status" value="1"/>
</dbReference>
<sequence>MTASKSTETLPGDNTNTWSGRFDEPVSELVQRYTASVGFDKRLAEYDIQGSLAHARMLAAGGIIGPHDLDAIERGLSQIRQEIQGGGFVWQLALEDVHLNIEKRLTALIGDAGKRLHTARSRNDQVATDIRLYLRASIDRITALIHAMQKALLHLAEQHVDTVMPGFTHLQVAQPIVFGHHLIAYFEMLKRDVERLADCRKRVNKLPLGAAALAGTSYSVDRAMVAQELGFEGVCENSLDAVSDRDFAIEFCAAAALIMTHLSRLSEELILWMSPPFGFIDLADRFCTGSSIMPQKKNPDVPELVRGKTGRVNGHLVALLTLMKAQPLAYNKDNQEDKEPLFDTVDTLTDTLRIYADMMAGIRVKETAMREAAKRGYATATDLADYLTKKGLPFREAHEAVAQAVRFAEKNNRDLSALTLPELQQFSPLIEDDIFTVLTLEGSLNSRNHIGGTAPVQVAAAIRRAREWLSATPAAQ</sequence>
<name>ARLY_NITMU</name>